<name>MYO3_CANGA</name>
<keyword id="KW-0009">Actin-binding</keyword>
<keyword id="KW-0067">ATP-binding</keyword>
<keyword id="KW-0963">Cytoplasm</keyword>
<keyword id="KW-0206">Cytoskeleton</keyword>
<keyword id="KW-0378">Hydrolase</keyword>
<keyword id="KW-0505">Motor protein</keyword>
<keyword id="KW-0518">Myosin</keyword>
<keyword id="KW-0547">Nucleotide-binding</keyword>
<keyword id="KW-0597">Phosphoprotein</keyword>
<keyword id="KW-1185">Reference proteome</keyword>
<keyword id="KW-0677">Repeat</keyword>
<keyword id="KW-0728">SH3 domain</keyword>
<reference key="1">
    <citation type="journal article" date="2004" name="Nature">
        <title>Genome evolution in yeasts.</title>
        <authorList>
            <person name="Dujon B."/>
            <person name="Sherman D."/>
            <person name="Fischer G."/>
            <person name="Durrens P."/>
            <person name="Casaregola S."/>
            <person name="Lafontaine I."/>
            <person name="de Montigny J."/>
            <person name="Marck C."/>
            <person name="Neuveglise C."/>
            <person name="Talla E."/>
            <person name="Goffard N."/>
            <person name="Frangeul L."/>
            <person name="Aigle M."/>
            <person name="Anthouard V."/>
            <person name="Babour A."/>
            <person name="Barbe V."/>
            <person name="Barnay S."/>
            <person name="Blanchin S."/>
            <person name="Beckerich J.-M."/>
            <person name="Beyne E."/>
            <person name="Bleykasten C."/>
            <person name="Boisrame A."/>
            <person name="Boyer J."/>
            <person name="Cattolico L."/>
            <person name="Confanioleri F."/>
            <person name="de Daruvar A."/>
            <person name="Despons L."/>
            <person name="Fabre E."/>
            <person name="Fairhead C."/>
            <person name="Ferry-Dumazet H."/>
            <person name="Groppi A."/>
            <person name="Hantraye F."/>
            <person name="Hennequin C."/>
            <person name="Jauniaux N."/>
            <person name="Joyet P."/>
            <person name="Kachouri R."/>
            <person name="Kerrest A."/>
            <person name="Koszul R."/>
            <person name="Lemaire M."/>
            <person name="Lesur I."/>
            <person name="Ma L."/>
            <person name="Muller H."/>
            <person name="Nicaud J.-M."/>
            <person name="Nikolski M."/>
            <person name="Oztas S."/>
            <person name="Ozier-Kalogeropoulos O."/>
            <person name="Pellenz S."/>
            <person name="Potier S."/>
            <person name="Richard G.-F."/>
            <person name="Straub M.-L."/>
            <person name="Suleau A."/>
            <person name="Swennen D."/>
            <person name="Tekaia F."/>
            <person name="Wesolowski-Louvel M."/>
            <person name="Westhof E."/>
            <person name="Wirth B."/>
            <person name="Zeniou-Meyer M."/>
            <person name="Zivanovic Y."/>
            <person name="Bolotin-Fukuhara M."/>
            <person name="Thierry A."/>
            <person name="Bouchier C."/>
            <person name="Caudron B."/>
            <person name="Scarpelli C."/>
            <person name="Gaillardin C."/>
            <person name="Weissenbach J."/>
            <person name="Wincker P."/>
            <person name="Souciet J.-L."/>
        </authorList>
    </citation>
    <scope>NUCLEOTIDE SEQUENCE [LARGE SCALE GENOMIC DNA]</scope>
    <source>
        <strain>ATCC 2001 / BCRC 20586 / JCM 3761 / NBRC 0622 / NRRL Y-65 / CBS 138</strain>
    </source>
</reference>
<sequence>MAIIKRVVRSKAGQAPVKKGAKIKKASYDSSRKKEVGVSDLTLLSKISDESINDNLKKRFEHGIIYTYIGYVLISVNPFRDLGIYTDDTMKSYQGKNRLEAPPHVFAIAENMYYNLKSYNENQCVIISGESGAGKTEAAKRIMQYIAATSSTHSESISKIKDMVLATNPLLESFGCAKTLRNNNSSRHGKYLEIKFDAHFQPCAGHITNYLLEKQRVVGQIKNERNFHIFYQFTKGAPEEYRQLFGVQQPEQYIYTSASQCTAVENMDDVEEFNETLNAMRTIGLTKSEQDQIFRALAAILWIGNISFVENEAGNAEIRDKSVTTFVAYLLEVQEELLIKALIERIIETTHGAKRGSTYHSPLNIIQATAVRDALAKAIYNNLFEWIVERVNNSLQAFPGADKSIGILDIYGFEIFEHNSFEQICINYVNEKLQQIFIQLTLKSEQDTYKKEQIHWTPIEYFDNKIVCDLIEAKRPPGIFAAMNDAIATAHADSDAADQAFAQRLNLFTTNPHFELRQNKFVVKHYAGDVTYDIFGITDKNKDQLQKDLVELLSTTSNSFVREIFPDQPQTDSRRRPPTSGDKIIKSANELVETLSKAQPSYIRTIKPNDTKSSTIYDDQRVLHQIKYLGLKENVRIRRAGFAHRQVFEKFVERFYLLSPQCSYAGDYVWDGETLDAVKLILQDASIPTTEYEIGVTQIFIKHPETLFALENMRDKYWYNMAARIQRAWRRYLQKRIDAAIRIQNAIRGKSGVSTFRNDELRNAGDKVYGGKKERRNMSLLGLRGFYGDYLSCNESKTRGSYIKRQANITERVLFSSHGNSLHAMYGGASQRLRKTFILTPTSLWIVGHTKARNAMKYITDYRIDLGKIRSISVTNLQDDWMAVNLMDSPKPDPLINLPFKTELITRLTQLNPRIHVKVSSTIEYLRGPKKLFVVKSQYSDSAPKYHDLYRNGTILVRHGNPPDSTAENRPAFNNEDMYGNLMEAKHKTMKKKVGTKRTPQALPTSSLAASAAQAAYHPKGIRSPTSTEQKSPSKSKPITKTRKPPVSSPVRNTSKTISNSKVYSAPKASVTKRTQDTVSVSKTSVKDDVTQEKNAIIQTEEKQNYSLPENIPQSSQTDSYQAAYDFPGSGNPSELPLQKGDIIYVSKSDPSGWSLASTLDNSKEGWVPTSYIVKYNGNVTDPSAQHQDMNTMKIQEDNTTSINEPETHTNQGPSNTDLGANLASVLAARANKLRSESEEDISREEDDDDDW</sequence>
<organism>
    <name type="scientific">Candida glabrata (strain ATCC 2001 / BCRC 20586 / JCM 3761 / NBRC 0622 / NRRL Y-65 / CBS 138)</name>
    <name type="common">Yeast</name>
    <name type="synonym">Nakaseomyces glabratus</name>
    <dbReference type="NCBI Taxonomy" id="284593"/>
    <lineage>
        <taxon>Eukaryota</taxon>
        <taxon>Fungi</taxon>
        <taxon>Dikarya</taxon>
        <taxon>Ascomycota</taxon>
        <taxon>Saccharomycotina</taxon>
        <taxon>Saccharomycetes</taxon>
        <taxon>Saccharomycetales</taxon>
        <taxon>Saccharomycetaceae</taxon>
        <taxon>Nakaseomyces</taxon>
    </lineage>
</organism>
<proteinExistence type="inferred from homology"/>
<dbReference type="EMBL" id="CR380957">
    <property type="protein sequence ID" value="CAG61514.1"/>
    <property type="molecule type" value="Genomic_DNA"/>
</dbReference>
<dbReference type="RefSeq" id="XP_448551.1">
    <property type="nucleotide sequence ID" value="XM_448551.1"/>
</dbReference>
<dbReference type="SMR" id="Q6FMJ3"/>
<dbReference type="STRING" id="284593.Q6FMJ3"/>
<dbReference type="EnsemblFungi" id="CAGL0K07590g-T">
    <property type="protein sequence ID" value="CAGL0K07590g-T-p1"/>
    <property type="gene ID" value="CAGL0K07590g"/>
</dbReference>
<dbReference type="GeneID" id="2890383"/>
<dbReference type="KEGG" id="cgr:2890383"/>
<dbReference type="CGD" id="CAL0134555">
    <property type="gene designation" value="MYO3"/>
</dbReference>
<dbReference type="VEuPathDB" id="FungiDB:B1J91_K07590g"/>
<dbReference type="VEuPathDB" id="FungiDB:CAGL0K07590g"/>
<dbReference type="eggNOG" id="KOG0162">
    <property type="taxonomic scope" value="Eukaryota"/>
</dbReference>
<dbReference type="HOGENOM" id="CLU_000192_7_6_1"/>
<dbReference type="InParanoid" id="Q6FMJ3"/>
<dbReference type="Proteomes" id="UP000002428">
    <property type="component" value="Chromosome K"/>
</dbReference>
<dbReference type="GO" id="GO:0030479">
    <property type="term" value="C:actin cortical patch"/>
    <property type="evidence" value="ECO:0007669"/>
    <property type="project" value="UniProtKB-SubCell"/>
</dbReference>
<dbReference type="GO" id="GO:0051286">
    <property type="term" value="C:cell tip"/>
    <property type="evidence" value="ECO:0007669"/>
    <property type="project" value="TreeGrafter"/>
</dbReference>
<dbReference type="GO" id="GO:0016459">
    <property type="term" value="C:myosin complex"/>
    <property type="evidence" value="ECO:0007669"/>
    <property type="project" value="UniProtKB-KW"/>
</dbReference>
<dbReference type="GO" id="GO:0005886">
    <property type="term" value="C:plasma membrane"/>
    <property type="evidence" value="ECO:0007669"/>
    <property type="project" value="TreeGrafter"/>
</dbReference>
<dbReference type="GO" id="GO:0051015">
    <property type="term" value="F:actin filament binding"/>
    <property type="evidence" value="ECO:0007669"/>
    <property type="project" value="TreeGrafter"/>
</dbReference>
<dbReference type="GO" id="GO:0005524">
    <property type="term" value="F:ATP binding"/>
    <property type="evidence" value="ECO:0007669"/>
    <property type="project" value="UniProtKB-KW"/>
</dbReference>
<dbReference type="GO" id="GO:0016787">
    <property type="term" value="F:hydrolase activity"/>
    <property type="evidence" value="ECO:0007669"/>
    <property type="project" value="UniProtKB-KW"/>
</dbReference>
<dbReference type="GO" id="GO:0000146">
    <property type="term" value="F:microfilament motor activity"/>
    <property type="evidence" value="ECO:0007669"/>
    <property type="project" value="TreeGrafter"/>
</dbReference>
<dbReference type="GO" id="GO:0051666">
    <property type="term" value="P:actin cortical patch localization"/>
    <property type="evidence" value="ECO:0007669"/>
    <property type="project" value="TreeGrafter"/>
</dbReference>
<dbReference type="GO" id="GO:0007015">
    <property type="term" value="P:actin filament organization"/>
    <property type="evidence" value="ECO:0007669"/>
    <property type="project" value="TreeGrafter"/>
</dbReference>
<dbReference type="GO" id="GO:0006897">
    <property type="term" value="P:endocytosis"/>
    <property type="evidence" value="ECO:0007669"/>
    <property type="project" value="TreeGrafter"/>
</dbReference>
<dbReference type="CDD" id="cd01378">
    <property type="entry name" value="MYSc_Myo1"/>
    <property type="match status" value="1"/>
</dbReference>
<dbReference type="CDD" id="cd11858">
    <property type="entry name" value="SH3_Myosin-I_fungi"/>
    <property type="match status" value="1"/>
</dbReference>
<dbReference type="FunFam" id="1.10.10.820:FF:000001">
    <property type="entry name" value="Myosin heavy chain"/>
    <property type="match status" value="1"/>
</dbReference>
<dbReference type="FunFam" id="1.20.120.720:FF:000015">
    <property type="entry name" value="Myosin I"/>
    <property type="match status" value="1"/>
</dbReference>
<dbReference type="FunFam" id="1.20.5.4820:FF:000004">
    <property type="entry name" value="Myosin IE"/>
    <property type="match status" value="1"/>
</dbReference>
<dbReference type="FunFam" id="1.20.58.530:FF:000007">
    <property type="entry name" value="Myosin IE"/>
    <property type="match status" value="1"/>
</dbReference>
<dbReference type="Gene3D" id="1.10.10.820">
    <property type="match status" value="1"/>
</dbReference>
<dbReference type="Gene3D" id="1.20.5.4820">
    <property type="match status" value="1"/>
</dbReference>
<dbReference type="Gene3D" id="1.20.58.530">
    <property type="match status" value="1"/>
</dbReference>
<dbReference type="Gene3D" id="3.40.850.10">
    <property type="entry name" value="Kinesin motor domain"/>
    <property type="match status" value="1"/>
</dbReference>
<dbReference type="Gene3D" id="1.20.120.720">
    <property type="entry name" value="Myosin VI head, motor domain, U50 subdomain"/>
    <property type="match status" value="1"/>
</dbReference>
<dbReference type="Gene3D" id="2.30.30.40">
    <property type="entry name" value="SH3 Domains"/>
    <property type="match status" value="1"/>
</dbReference>
<dbReference type="InterPro" id="IPR035535">
    <property type="entry name" value="Fungal_myosin-I_SH3"/>
</dbReference>
<dbReference type="InterPro" id="IPR036961">
    <property type="entry name" value="Kinesin_motor_dom_sf"/>
</dbReference>
<dbReference type="InterPro" id="IPR001609">
    <property type="entry name" value="Myosin_head_motor_dom-like"/>
</dbReference>
<dbReference type="InterPro" id="IPR010926">
    <property type="entry name" value="Myosin_TH1"/>
</dbReference>
<dbReference type="InterPro" id="IPR036072">
    <property type="entry name" value="MYSc_Myo1"/>
</dbReference>
<dbReference type="InterPro" id="IPR027417">
    <property type="entry name" value="P-loop_NTPase"/>
</dbReference>
<dbReference type="InterPro" id="IPR036028">
    <property type="entry name" value="SH3-like_dom_sf"/>
</dbReference>
<dbReference type="InterPro" id="IPR001452">
    <property type="entry name" value="SH3_domain"/>
</dbReference>
<dbReference type="PANTHER" id="PTHR13140">
    <property type="entry name" value="MYOSIN"/>
    <property type="match status" value="1"/>
</dbReference>
<dbReference type="PANTHER" id="PTHR13140:SF837">
    <property type="entry name" value="MYOSIN-3-RELATED"/>
    <property type="match status" value="1"/>
</dbReference>
<dbReference type="Pfam" id="PF00063">
    <property type="entry name" value="Myosin_head"/>
    <property type="match status" value="1"/>
</dbReference>
<dbReference type="Pfam" id="PF06017">
    <property type="entry name" value="Myosin_TH1"/>
    <property type="match status" value="1"/>
</dbReference>
<dbReference type="Pfam" id="PF00018">
    <property type="entry name" value="SH3_1"/>
    <property type="match status" value="1"/>
</dbReference>
<dbReference type="PRINTS" id="PR00193">
    <property type="entry name" value="MYOSINHEAVY"/>
</dbReference>
<dbReference type="SMART" id="SM00242">
    <property type="entry name" value="MYSc"/>
    <property type="match status" value="1"/>
</dbReference>
<dbReference type="SMART" id="SM00326">
    <property type="entry name" value="SH3"/>
    <property type="match status" value="1"/>
</dbReference>
<dbReference type="SUPFAM" id="SSF52540">
    <property type="entry name" value="P-loop containing nucleoside triphosphate hydrolases"/>
    <property type="match status" value="1"/>
</dbReference>
<dbReference type="SUPFAM" id="SSF50044">
    <property type="entry name" value="SH3-domain"/>
    <property type="match status" value="1"/>
</dbReference>
<dbReference type="PROSITE" id="PS51456">
    <property type="entry name" value="MYOSIN_MOTOR"/>
    <property type="match status" value="1"/>
</dbReference>
<dbReference type="PROSITE" id="PS50002">
    <property type="entry name" value="SH3"/>
    <property type="match status" value="1"/>
</dbReference>
<dbReference type="PROSITE" id="PS51757">
    <property type="entry name" value="TH1"/>
    <property type="match status" value="1"/>
</dbReference>
<protein>
    <recommendedName>
        <fullName>Myosin-3</fullName>
    </recommendedName>
    <alternativeName>
        <fullName>Class I unconventional myosin MYO3</fullName>
    </alternativeName>
    <alternativeName>
        <fullName>Type I myosin MYO3</fullName>
    </alternativeName>
</protein>
<gene>
    <name type="primary">MYO3</name>
    <name type="ordered locus">CAGL0K07590g</name>
</gene>
<accession>Q6FMJ3</accession>
<comment type="function">
    <text evidence="1">Type-I myosin implicated in the organization of the actin cytoskeleton. Required for proper actin cytoskeleton polarization. At the cell cortex, assembles in patch-like structures together with proteins from the actin-polymerizing machinery and promotes actin assembly. Functions as actin nucleation-promoting factor (NPF) for the Arp2/3 complex (By similarity).</text>
</comment>
<comment type="subcellular location">
    <subcellularLocation>
        <location evidence="1">Cytoplasm</location>
        <location evidence="1">Cytoskeleton</location>
        <location evidence="1">Actin patch</location>
    </subcellularLocation>
</comment>
<comment type="domain">
    <text evidence="1">The myosin motor domain displays actin-stimulated ATPase activity and generates a mechanochemical force.</text>
</comment>
<comment type="domain">
    <text evidence="1">The tail domain participates in molecular interactions that specify the role of the motor domain (By similarity). It is composed of several tail homology (TH) domains, namely a putative phospholipid-binding myosin tail domain (also named TH1), an Ala- and Pro-rich domain (TH2), followed by an SH3 domain and a C-terminal acidic domain (TH3).</text>
</comment>
<comment type="PTM">
    <text evidence="1">Phosphorylation of the TEDS site (Ser-357) is required for the polarization of the actin cytoskeleton. Phosphorylation probably activates the myosin-I ATPase activity (By similarity).</text>
</comment>
<comment type="similarity">
    <text evidence="7">Belongs to the TRAFAC class myosin-kinesin ATPase superfamily. Myosin family.</text>
</comment>
<feature type="chain" id="PRO_0000338544" description="Myosin-3">
    <location>
        <begin position="1"/>
        <end position="1252"/>
    </location>
</feature>
<feature type="domain" description="Myosin motor" evidence="4">
    <location>
        <begin position="36"/>
        <end position="715"/>
    </location>
</feature>
<feature type="domain" description="IQ 1">
    <location>
        <begin position="719"/>
        <end position="739"/>
    </location>
</feature>
<feature type="domain" description="IQ 2">
    <location>
        <begin position="740"/>
        <end position="767"/>
    </location>
</feature>
<feature type="domain" description="TH1" evidence="5">
    <location>
        <begin position="773"/>
        <end position="963"/>
    </location>
</feature>
<feature type="domain" description="SH3" evidence="3">
    <location>
        <begin position="1116"/>
        <end position="1178"/>
    </location>
</feature>
<feature type="region of interest" description="Actin-binding" evidence="1">
    <location>
        <begin position="404"/>
        <end position="486"/>
    </location>
</feature>
<feature type="region of interest" description="Disordered" evidence="6">
    <location>
        <begin position="988"/>
        <end position="1086"/>
    </location>
</feature>
<feature type="region of interest" description="Disordered" evidence="6">
    <location>
        <begin position="1106"/>
        <end position="1136"/>
    </location>
</feature>
<feature type="region of interest" description="Disordered" evidence="6">
    <location>
        <begin position="1203"/>
        <end position="1252"/>
    </location>
</feature>
<feature type="compositionally biased region" description="Low complexity" evidence="6">
    <location>
        <begin position="997"/>
        <end position="1016"/>
    </location>
</feature>
<feature type="compositionally biased region" description="Polar residues" evidence="6">
    <location>
        <begin position="1050"/>
        <end position="1063"/>
    </location>
</feature>
<feature type="compositionally biased region" description="Polar residues" evidence="6">
    <location>
        <begin position="1106"/>
        <end position="1121"/>
    </location>
</feature>
<feature type="compositionally biased region" description="Polar residues" evidence="6">
    <location>
        <begin position="1203"/>
        <end position="1219"/>
    </location>
</feature>
<feature type="compositionally biased region" description="Acidic residues" evidence="6">
    <location>
        <begin position="1238"/>
        <end position="1252"/>
    </location>
</feature>
<feature type="binding site" evidence="2">
    <location>
        <begin position="129"/>
        <end position="136"/>
    </location>
    <ligand>
        <name>ATP</name>
        <dbReference type="ChEBI" id="CHEBI:30616"/>
    </ligand>
</feature>
<feature type="modified residue" description="Phosphoserine" evidence="1">
    <location>
        <position position="357"/>
    </location>
</feature>
<evidence type="ECO:0000250" key="1"/>
<evidence type="ECO:0000255" key="2"/>
<evidence type="ECO:0000255" key="3">
    <source>
        <dbReference type="PROSITE-ProRule" id="PRU00192"/>
    </source>
</evidence>
<evidence type="ECO:0000255" key="4">
    <source>
        <dbReference type="PROSITE-ProRule" id="PRU00782"/>
    </source>
</evidence>
<evidence type="ECO:0000255" key="5">
    <source>
        <dbReference type="PROSITE-ProRule" id="PRU01093"/>
    </source>
</evidence>
<evidence type="ECO:0000256" key="6">
    <source>
        <dbReference type="SAM" id="MobiDB-lite"/>
    </source>
</evidence>
<evidence type="ECO:0000305" key="7"/>